<comment type="function">
    <text evidence="2">During stationary phase, binds the chromosome non-specifically, forming a highly ordered and stable dps-DNA co-crystal within which chromosomal DNA is condensed and protected from diverse damages. It protects DNA from oxidative damage by sequestering intracellular Fe(2+) ion and storing it in the form of Fe(3+) oxyhydroxide mineral, which can be released after reduction. One hydrogen peroxide oxidizes two Fe(2+) ions, which prevents hydroxyl radical production by the Fenton reaction.</text>
</comment>
<comment type="catalytic activity">
    <reaction evidence="2">
        <text>2 Fe(2+) + H2O2 + 2 H(+) = 2 Fe(3+) + 2 H2O</text>
        <dbReference type="Rhea" id="RHEA:48712"/>
        <dbReference type="ChEBI" id="CHEBI:15377"/>
        <dbReference type="ChEBI" id="CHEBI:15378"/>
        <dbReference type="ChEBI" id="CHEBI:16240"/>
        <dbReference type="ChEBI" id="CHEBI:29033"/>
        <dbReference type="ChEBI" id="CHEBI:29034"/>
    </reaction>
</comment>
<comment type="subunit">
    <text evidence="2">Homododecamer. The 12 subunits form a hollow sphere into which the mineral iron core of up to 500 Fe(3+) can be deposited.</text>
</comment>
<comment type="subcellular location">
    <subcellularLocation>
        <location evidence="2">Cytoplasm</location>
    </subcellularLocation>
</comment>
<comment type="similarity">
    <text evidence="2">Belongs to the Dps family.</text>
</comment>
<feature type="initiator methionine" description="Removed" evidence="1">
    <location>
        <position position="1"/>
    </location>
</feature>
<feature type="chain" id="PRO_0000271589" description="DNA protection during starvation protein">
    <location>
        <begin position="2"/>
        <end position="167"/>
    </location>
</feature>
<feature type="binding site" evidence="2">
    <location>
        <position position="51"/>
    </location>
    <ligand>
        <name>Fe cation</name>
        <dbReference type="ChEBI" id="CHEBI:24875"/>
    </ligand>
</feature>
<feature type="binding site" evidence="2">
    <location>
        <position position="78"/>
    </location>
    <ligand>
        <name>Fe cation</name>
        <dbReference type="ChEBI" id="CHEBI:24875"/>
    </ligand>
</feature>
<feature type="binding site" evidence="2">
    <location>
        <position position="82"/>
    </location>
    <ligand>
        <name>Fe cation</name>
        <dbReference type="ChEBI" id="CHEBI:24875"/>
    </ligand>
</feature>
<protein>
    <recommendedName>
        <fullName evidence="2">DNA protection during starvation protein</fullName>
        <ecNumber evidence="2">1.16.-.-</ecNumber>
    </recommendedName>
</protein>
<accession>Q57RC9</accession>
<dbReference type="EC" id="1.16.-.-" evidence="2"/>
<dbReference type="EMBL" id="AE017220">
    <property type="protein sequence ID" value="AAX64732.1"/>
    <property type="molecule type" value="Genomic_DNA"/>
</dbReference>
<dbReference type="RefSeq" id="WP_000100805.1">
    <property type="nucleotide sequence ID" value="NC_006905.1"/>
</dbReference>
<dbReference type="SMR" id="Q57RC9"/>
<dbReference type="KEGG" id="sec:SCH_0826"/>
<dbReference type="HOGENOM" id="CLU_098183_1_2_6"/>
<dbReference type="Proteomes" id="UP000000538">
    <property type="component" value="Chromosome"/>
</dbReference>
<dbReference type="GO" id="GO:0005737">
    <property type="term" value="C:cytoplasm"/>
    <property type="evidence" value="ECO:0007669"/>
    <property type="project" value="UniProtKB-SubCell"/>
</dbReference>
<dbReference type="GO" id="GO:0003677">
    <property type="term" value="F:DNA binding"/>
    <property type="evidence" value="ECO:0007669"/>
    <property type="project" value="UniProtKB-UniRule"/>
</dbReference>
<dbReference type="GO" id="GO:0008199">
    <property type="term" value="F:ferric iron binding"/>
    <property type="evidence" value="ECO:0007669"/>
    <property type="project" value="UniProtKB-UniRule"/>
</dbReference>
<dbReference type="GO" id="GO:0016722">
    <property type="term" value="F:oxidoreductase activity, acting on metal ions"/>
    <property type="evidence" value="ECO:0007669"/>
    <property type="project" value="InterPro"/>
</dbReference>
<dbReference type="GO" id="GO:0030261">
    <property type="term" value="P:chromosome condensation"/>
    <property type="evidence" value="ECO:0007669"/>
    <property type="project" value="UniProtKB-KW"/>
</dbReference>
<dbReference type="GO" id="GO:0006879">
    <property type="term" value="P:intracellular iron ion homeostasis"/>
    <property type="evidence" value="ECO:0007669"/>
    <property type="project" value="UniProtKB-KW"/>
</dbReference>
<dbReference type="CDD" id="cd01043">
    <property type="entry name" value="DPS"/>
    <property type="match status" value="1"/>
</dbReference>
<dbReference type="FunFam" id="1.20.1260.10:FF:000003">
    <property type="entry name" value="DNA protection during starvation protein"/>
    <property type="match status" value="1"/>
</dbReference>
<dbReference type="Gene3D" id="1.20.1260.10">
    <property type="match status" value="1"/>
</dbReference>
<dbReference type="HAMAP" id="MF_01441">
    <property type="entry name" value="Dps"/>
    <property type="match status" value="1"/>
</dbReference>
<dbReference type="InterPro" id="IPR002177">
    <property type="entry name" value="DPS_DNA-bd"/>
</dbReference>
<dbReference type="InterPro" id="IPR023188">
    <property type="entry name" value="DPS_DNA-bd_CS"/>
</dbReference>
<dbReference type="InterPro" id="IPR023067">
    <property type="entry name" value="Dps_gammaproteobac"/>
</dbReference>
<dbReference type="InterPro" id="IPR012347">
    <property type="entry name" value="Ferritin-like"/>
</dbReference>
<dbReference type="InterPro" id="IPR009078">
    <property type="entry name" value="Ferritin-like_SF"/>
</dbReference>
<dbReference type="InterPro" id="IPR008331">
    <property type="entry name" value="Ferritin_DPS_dom"/>
</dbReference>
<dbReference type="NCBIfam" id="NF006975">
    <property type="entry name" value="PRK09448.1"/>
    <property type="match status" value="1"/>
</dbReference>
<dbReference type="PANTHER" id="PTHR42932:SF3">
    <property type="entry name" value="DNA PROTECTION DURING STARVATION PROTEIN"/>
    <property type="match status" value="1"/>
</dbReference>
<dbReference type="PANTHER" id="PTHR42932">
    <property type="entry name" value="GENERAL STRESS PROTEIN 20U"/>
    <property type="match status" value="1"/>
</dbReference>
<dbReference type="Pfam" id="PF00210">
    <property type="entry name" value="Ferritin"/>
    <property type="match status" value="1"/>
</dbReference>
<dbReference type="PIRSF" id="PIRSF005900">
    <property type="entry name" value="Dps"/>
    <property type="match status" value="1"/>
</dbReference>
<dbReference type="PRINTS" id="PR01346">
    <property type="entry name" value="HELNAPAPROT"/>
</dbReference>
<dbReference type="SUPFAM" id="SSF47240">
    <property type="entry name" value="Ferritin-like"/>
    <property type="match status" value="1"/>
</dbReference>
<dbReference type="PROSITE" id="PS00818">
    <property type="entry name" value="DPS_1"/>
    <property type="match status" value="1"/>
</dbReference>
<dbReference type="PROSITE" id="PS00819">
    <property type="entry name" value="DPS_2"/>
    <property type="match status" value="1"/>
</dbReference>
<evidence type="ECO:0000250" key="1"/>
<evidence type="ECO:0000255" key="2">
    <source>
        <dbReference type="HAMAP-Rule" id="MF_01441"/>
    </source>
</evidence>
<name>DPS_SALCH</name>
<proteinExistence type="inferred from homology"/>
<gene>
    <name evidence="2" type="primary">dps</name>
    <name type="ordered locus">SCH_0826</name>
</gene>
<sequence>MSTAKLVKTKASNLLYTRNDVSESDKKATVELLNRQVIQFIDLSLITKQAHWNMRGANFIAVHEMLDGFRTALTDHLDTMAERAVQLGGVALGTTQVINSKTPLKSYPLDIHNVQDHLKELADRYAVVANDVRKAIGEAKDEDTADIFTAASRDLDKFLWFIESNIE</sequence>
<reference key="1">
    <citation type="journal article" date="2005" name="Nucleic Acids Res.">
        <title>The genome sequence of Salmonella enterica serovar Choleraesuis, a highly invasive and resistant zoonotic pathogen.</title>
        <authorList>
            <person name="Chiu C.-H."/>
            <person name="Tang P."/>
            <person name="Chu C."/>
            <person name="Hu S."/>
            <person name="Bao Q."/>
            <person name="Yu J."/>
            <person name="Chou Y.-Y."/>
            <person name="Wang H.-S."/>
            <person name="Lee Y.-S."/>
        </authorList>
    </citation>
    <scope>NUCLEOTIDE SEQUENCE [LARGE SCALE GENOMIC DNA]</scope>
    <source>
        <strain>SC-B67</strain>
    </source>
</reference>
<keyword id="KW-0963">Cytoplasm</keyword>
<keyword id="KW-0226">DNA condensation</keyword>
<keyword id="KW-0238">DNA-binding</keyword>
<keyword id="KW-0408">Iron</keyword>
<keyword id="KW-0409">Iron storage</keyword>
<keyword id="KW-0479">Metal-binding</keyword>
<keyword id="KW-0560">Oxidoreductase</keyword>
<organism>
    <name type="scientific">Salmonella choleraesuis (strain SC-B67)</name>
    <dbReference type="NCBI Taxonomy" id="321314"/>
    <lineage>
        <taxon>Bacteria</taxon>
        <taxon>Pseudomonadati</taxon>
        <taxon>Pseudomonadota</taxon>
        <taxon>Gammaproteobacteria</taxon>
        <taxon>Enterobacterales</taxon>
        <taxon>Enterobacteriaceae</taxon>
        <taxon>Salmonella</taxon>
    </lineage>
</organism>